<keyword id="KW-0067">ATP-binding</keyword>
<keyword id="KW-0963">Cytoplasm</keyword>
<keyword id="KW-1015">Disulfide bond</keyword>
<keyword id="KW-0547">Nucleotide-binding</keyword>
<keyword id="KW-1185">Reference proteome</keyword>
<keyword id="KW-0694">RNA-binding</keyword>
<keyword id="KW-0808">Transferase</keyword>
<keyword id="KW-0819">tRNA processing</keyword>
<keyword id="KW-0820">tRNA-binding</keyword>
<sequence length="368" mass="41383">MTDNSQIKVIVGMSGGVDSSVSAYLLQQQGYQVEGLFMKNWEEDDTDEYCSAAQDLADAKAVCDKLGMKLHTINFAAEYWDNVFEHFLEEYKAGRTPNPDILCNKEIKFKAFLEFAAEELGATYIATGHYVRRDDSTGRPRLLRGLDTNKDQSYFLYTLSEAQVGQSLFPVGDLEKPEVRRIAEQLDLITAKKKDSTGICFIGERKFKDFLAKFLPAQPGPIETVDGKVIGEHQGLMYHTLGQRKGLGIGGRKDATEEAWYVVDKEVERNTLVVAQGEHPRLYSDGLIASQLHWVDRTPIRAPRRCTVKTRYRQEDIPCLIQPIDDETIRVIFDEKQAAVTPGQSAVFYDGEVCLGGGIIEQRFSHPV</sequence>
<feature type="chain" id="PRO_1000009503" description="tRNA-specific 2-thiouridylase MnmA">
    <location>
        <begin position="1"/>
        <end position="368"/>
    </location>
</feature>
<feature type="region of interest" description="Interaction with target base in tRNA" evidence="1">
    <location>
        <begin position="98"/>
        <end position="100"/>
    </location>
</feature>
<feature type="region of interest" description="Interaction with tRNA" evidence="1">
    <location>
        <begin position="150"/>
        <end position="152"/>
    </location>
</feature>
<feature type="region of interest" description="Interaction with tRNA" evidence="1">
    <location>
        <begin position="311"/>
        <end position="312"/>
    </location>
</feature>
<feature type="active site" description="Nucleophile" evidence="1">
    <location>
        <position position="103"/>
    </location>
</feature>
<feature type="active site" description="Cysteine persulfide intermediate" evidence="1">
    <location>
        <position position="200"/>
    </location>
</feature>
<feature type="binding site" evidence="1">
    <location>
        <begin position="12"/>
        <end position="19"/>
    </location>
    <ligand>
        <name>ATP</name>
        <dbReference type="ChEBI" id="CHEBI:30616"/>
    </ligand>
</feature>
<feature type="binding site" evidence="1">
    <location>
        <position position="38"/>
    </location>
    <ligand>
        <name>ATP</name>
        <dbReference type="ChEBI" id="CHEBI:30616"/>
    </ligand>
</feature>
<feature type="binding site" evidence="1">
    <location>
        <position position="128"/>
    </location>
    <ligand>
        <name>ATP</name>
        <dbReference type="ChEBI" id="CHEBI:30616"/>
    </ligand>
</feature>
<feature type="site" description="Interaction with tRNA" evidence="1">
    <location>
        <position position="129"/>
    </location>
</feature>
<feature type="site" description="Interaction with tRNA" evidence="1">
    <location>
        <position position="344"/>
    </location>
</feature>
<feature type="disulfide bond" description="Alternate" evidence="1">
    <location>
        <begin position="103"/>
        <end position="200"/>
    </location>
</feature>
<reference key="1">
    <citation type="journal article" date="2006" name="J. Bacteriol.">
        <title>Genome sequence of Aeromonas hydrophila ATCC 7966T: jack of all trades.</title>
        <authorList>
            <person name="Seshadri R."/>
            <person name="Joseph S.W."/>
            <person name="Chopra A.K."/>
            <person name="Sha J."/>
            <person name="Shaw J."/>
            <person name="Graf J."/>
            <person name="Haft D.H."/>
            <person name="Wu M."/>
            <person name="Ren Q."/>
            <person name="Rosovitz M.J."/>
            <person name="Madupu R."/>
            <person name="Tallon L."/>
            <person name="Kim M."/>
            <person name="Jin S."/>
            <person name="Vuong H."/>
            <person name="Stine O.C."/>
            <person name="Ali A."/>
            <person name="Horneman A.J."/>
            <person name="Heidelberg J.F."/>
        </authorList>
    </citation>
    <scope>NUCLEOTIDE SEQUENCE [LARGE SCALE GENOMIC DNA]</scope>
    <source>
        <strain>ATCC 7966 / DSM 30187 / BCRC 13018 / CCUG 14551 / JCM 1027 / KCTC 2358 / NCIMB 9240 / NCTC 8049</strain>
    </source>
</reference>
<dbReference type="EC" id="2.8.1.13" evidence="1"/>
<dbReference type="EMBL" id="CP000462">
    <property type="protein sequence ID" value="ABK36298.1"/>
    <property type="molecule type" value="Genomic_DNA"/>
</dbReference>
<dbReference type="RefSeq" id="WP_011705316.1">
    <property type="nucleotide sequence ID" value="NC_008570.1"/>
</dbReference>
<dbReference type="RefSeq" id="YP_855954.1">
    <property type="nucleotide sequence ID" value="NC_008570.1"/>
</dbReference>
<dbReference type="SMR" id="A0KI53"/>
<dbReference type="STRING" id="380703.AHA_1415"/>
<dbReference type="EnsemblBacteria" id="ABK36298">
    <property type="protein sequence ID" value="ABK36298"/>
    <property type="gene ID" value="AHA_1415"/>
</dbReference>
<dbReference type="GeneID" id="4487085"/>
<dbReference type="KEGG" id="aha:AHA_1415"/>
<dbReference type="PATRIC" id="fig|380703.7.peg.1423"/>
<dbReference type="eggNOG" id="COG0482">
    <property type="taxonomic scope" value="Bacteria"/>
</dbReference>
<dbReference type="HOGENOM" id="CLU_035188_1_0_6"/>
<dbReference type="OrthoDB" id="9800696at2"/>
<dbReference type="Proteomes" id="UP000000756">
    <property type="component" value="Chromosome"/>
</dbReference>
<dbReference type="GO" id="GO:0005737">
    <property type="term" value="C:cytoplasm"/>
    <property type="evidence" value="ECO:0007669"/>
    <property type="project" value="UniProtKB-SubCell"/>
</dbReference>
<dbReference type="GO" id="GO:0005524">
    <property type="term" value="F:ATP binding"/>
    <property type="evidence" value="ECO:0007669"/>
    <property type="project" value="UniProtKB-KW"/>
</dbReference>
<dbReference type="GO" id="GO:0000049">
    <property type="term" value="F:tRNA binding"/>
    <property type="evidence" value="ECO:0007669"/>
    <property type="project" value="UniProtKB-KW"/>
</dbReference>
<dbReference type="GO" id="GO:0103016">
    <property type="term" value="F:tRNA-uridine 2-sulfurtransferase activity"/>
    <property type="evidence" value="ECO:0007669"/>
    <property type="project" value="UniProtKB-EC"/>
</dbReference>
<dbReference type="GO" id="GO:0002143">
    <property type="term" value="P:tRNA wobble position uridine thiolation"/>
    <property type="evidence" value="ECO:0007669"/>
    <property type="project" value="TreeGrafter"/>
</dbReference>
<dbReference type="CDD" id="cd01998">
    <property type="entry name" value="MnmA_TRMU-like"/>
    <property type="match status" value="1"/>
</dbReference>
<dbReference type="FunFam" id="2.30.30.280:FF:000001">
    <property type="entry name" value="tRNA-specific 2-thiouridylase MnmA"/>
    <property type="match status" value="1"/>
</dbReference>
<dbReference type="FunFam" id="2.40.30.10:FF:000023">
    <property type="entry name" value="tRNA-specific 2-thiouridylase MnmA"/>
    <property type="match status" value="1"/>
</dbReference>
<dbReference type="FunFam" id="3.40.50.620:FF:000004">
    <property type="entry name" value="tRNA-specific 2-thiouridylase MnmA"/>
    <property type="match status" value="1"/>
</dbReference>
<dbReference type="Gene3D" id="2.30.30.280">
    <property type="entry name" value="Adenine nucleotide alpha hydrolases-like domains"/>
    <property type="match status" value="1"/>
</dbReference>
<dbReference type="Gene3D" id="3.40.50.620">
    <property type="entry name" value="HUPs"/>
    <property type="match status" value="1"/>
</dbReference>
<dbReference type="Gene3D" id="2.40.30.10">
    <property type="entry name" value="Translation factors"/>
    <property type="match status" value="1"/>
</dbReference>
<dbReference type="HAMAP" id="MF_00144">
    <property type="entry name" value="tRNA_thiouridyl_MnmA"/>
    <property type="match status" value="1"/>
</dbReference>
<dbReference type="InterPro" id="IPR004506">
    <property type="entry name" value="MnmA-like"/>
</dbReference>
<dbReference type="InterPro" id="IPR046885">
    <property type="entry name" value="MnmA-like_C"/>
</dbReference>
<dbReference type="InterPro" id="IPR046884">
    <property type="entry name" value="MnmA-like_central"/>
</dbReference>
<dbReference type="InterPro" id="IPR023382">
    <property type="entry name" value="MnmA-like_central_sf"/>
</dbReference>
<dbReference type="InterPro" id="IPR014729">
    <property type="entry name" value="Rossmann-like_a/b/a_fold"/>
</dbReference>
<dbReference type="NCBIfam" id="NF001138">
    <property type="entry name" value="PRK00143.1"/>
    <property type="match status" value="1"/>
</dbReference>
<dbReference type="NCBIfam" id="TIGR00420">
    <property type="entry name" value="trmU"/>
    <property type="match status" value="1"/>
</dbReference>
<dbReference type="PANTHER" id="PTHR11933:SF5">
    <property type="entry name" value="MITOCHONDRIAL TRNA-SPECIFIC 2-THIOURIDYLASE 1"/>
    <property type="match status" value="1"/>
</dbReference>
<dbReference type="PANTHER" id="PTHR11933">
    <property type="entry name" value="TRNA 5-METHYLAMINOMETHYL-2-THIOURIDYLATE -METHYLTRANSFERASE"/>
    <property type="match status" value="1"/>
</dbReference>
<dbReference type="Pfam" id="PF03054">
    <property type="entry name" value="tRNA_Me_trans"/>
    <property type="match status" value="1"/>
</dbReference>
<dbReference type="Pfam" id="PF20258">
    <property type="entry name" value="tRNA_Me_trans_C"/>
    <property type="match status" value="1"/>
</dbReference>
<dbReference type="Pfam" id="PF20259">
    <property type="entry name" value="tRNA_Me_trans_M"/>
    <property type="match status" value="1"/>
</dbReference>
<dbReference type="SUPFAM" id="SSF52402">
    <property type="entry name" value="Adenine nucleotide alpha hydrolases-like"/>
    <property type="match status" value="1"/>
</dbReference>
<evidence type="ECO:0000255" key="1">
    <source>
        <dbReference type="HAMAP-Rule" id="MF_00144"/>
    </source>
</evidence>
<proteinExistence type="inferred from homology"/>
<comment type="function">
    <text evidence="1">Catalyzes the 2-thiolation of uridine at the wobble position (U34) of tRNA, leading to the formation of s(2)U34.</text>
</comment>
<comment type="catalytic activity">
    <reaction evidence="1">
        <text>S-sulfanyl-L-cysteinyl-[protein] + uridine(34) in tRNA + AH2 + ATP = 2-thiouridine(34) in tRNA + L-cysteinyl-[protein] + A + AMP + diphosphate + H(+)</text>
        <dbReference type="Rhea" id="RHEA:47032"/>
        <dbReference type="Rhea" id="RHEA-COMP:10131"/>
        <dbReference type="Rhea" id="RHEA-COMP:11726"/>
        <dbReference type="Rhea" id="RHEA-COMP:11727"/>
        <dbReference type="Rhea" id="RHEA-COMP:11728"/>
        <dbReference type="ChEBI" id="CHEBI:13193"/>
        <dbReference type="ChEBI" id="CHEBI:15378"/>
        <dbReference type="ChEBI" id="CHEBI:17499"/>
        <dbReference type="ChEBI" id="CHEBI:29950"/>
        <dbReference type="ChEBI" id="CHEBI:30616"/>
        <dbReference type="ChEBI" id="CHEBI:33019"/>
        <dbReference type="ChEBI" id="CHEBI:61963"/>
        <dbReference type="ChEBI" id="CHEBI:65315"/>
        <dbReference type="ChEBI" id="CHEBI:87170"/>
        <dbReference type="ChEBI" id="CHEBI:456215"/>
        <dbReference type="EC" id="2.8.1.13"/>
    </reaction>
</comment>
<comment type="subcellular location">
    <subcellularLocation>
        <location evidence="1">Cytoplasm</location>
    </subcellularLocation>
</comment>
<comment type="similarity">
    <text evidence="1">Belongs to the MnmA/TRMU family.</text>
</comment>
<protein>
    <recommendedName>
        <fullName evidence="1">tRNA-specific 2-thiouridylase MnmA</fullName>
        <ecNumber evidence="1">2.8.1.13</ecNumber>
    </recommendedName>
</protein>
<gene>
    <name evidence="1" type="primary">mnmA</name>
    <name type="synonym">trmU</name>
    <name type="ordered locus">AHA_1415</name>
</gene>
<organism>
    <name type="scientific">Aeromonas hydrophila subsp. hydrophila (strain ATCC 7966 / DSM 30187 / BCRC 13018 / CCUG 14551 / JCM 1027 / KCTC 2358 / NCIMB 9240 / NCTC 8049)</name>
    <dbReference type="NCBI Taxonomy" id="380703"/>
    <lineage>
        <taxon>Bacteria</taxon>
        <taxon>Pseudomonadati</taxon>
        <taxon>Pseudomonadota</taxon>
        <taxon>Gammaproteobacteria</taxon>
        <taxon>Aeromonadales</taxon>
        <taxon>Aeromonadaceae</taxon>
        <taxon>Aeromonas</taxon>
    </lineage>
</organism>
<name>MNMA_AERHH</name>
<accession>A0KI53</accession>